<keyword id="KW-0007">Acetylation</keyword>
<keyword id="KW-0158">Chromosome</keyword>
<keyword id="KW-0903">Direct protein sequencing</keyword>
<keyword id="KW-0238">DNA-binding</keyword>
<keyword id="KW-0544">Nucleosome core</keyword>
<keyword id="KW-0539">Nucleus</keyword>
<feature type="initiator methionine" description="Removed" evidence="3">
    <location>
        <position position="1"/>
    </location>
</feature>
<feature type="chain" id="PRO_0000158365" description="Histone H4, major">
    <location>
        <begin position="2"/>
        <end position="103"/>
    </location>
</feature>
<feature type="DNA-binding region">
    <location>
        <begin position="16"/>
        <end position="21"/>
    </location>
</feature>
<feature type="region of interest" description="Disordered" evidence="2">
    <location>
        <begin position="1"/>
        <end position="29"/>
    </location>
</feature>
<feature type="compositionally biased region" description="Gly residues" evidence="2">
    <location>
        <begin position="1"/>
        <end position="12"/>
    </location>
</feature>
<feature type="compositionally biased region" description="Basic residues" evidence="2">
    <location>
        <begin position="14"/>
        <end position="23"/>
    </location>
</feature>
<feature type="modified residue" description="N6-acetyllysine" evidence="3">
    <location>
        <position position="5"/>
    </location>
</feature>
<feature type="modified residue" description="N6-acetyllysine" evidence="3">
    <location>
        <position position="8"/>
    </location>
</feature>
<feature type="modified residue" description="N6-acetyllysine" evidence="3">
    <location>
        <position position="12"/>
    </location>
</feature>
<feature type="modified residue" description="N6-acetyllysine" evidence="3">
    <location>
        <position position="16"/>
    </location>
</feature>
<comment type="function">
    <text>Core component of nucleosome. Nucleosomes wrap and compact DNA into chromatin, limiting DNA accessibility to the cellular machineries which require DNA as a template. Histones thereby play a central role in transcription regulation, DNA repair, DNA replication and chromosomal stability. DNA accessibility is regulated via a complex set of post-translational modifications of histones, also called histone code, and nucleosome remodeling.</text>
</comment>
<comment type="subunit">
    <text>The nucleosome is a histone octamer containing two molecules each of H2A, H2B, H3 and H4 assembled in one H3-H4 heterotetramer and two H2A-H2B heterodimers. The octamer wraps approximately 147 bp of DNA.</text>
</comment>
<comment type="subcellular location">
    <subcellularLocation>
        <location evidence="1">Nucleus</location>
    </subcellularLocation>
    <subcellularLocation>
        <location evidence="1">Chromosome</location>
    </subcellularLocation>
</comment>
<comment type="similarity">
    <text evidence="4">Belongs to the histone H4 family.</text>
</comment>
<accession>P02310</accession>
<accession>Q27846</accession>
<evidence type="ECO:0000250" key="1"/>
<evidence type="ECO:0000256" key="2">
    <source>
        <dbReference type="SAM" id="MobiDB-lite"/>
    </source>
</evidence>
<evidence type="ECO:0000269" key="3">
    <source>
    </source>
</evidence>
<evidence type="ECO:0000305" key="4"/>
<protein>
    <recommendedName>
        <fullName>Histone H4, major</fullName>
    </recommendedName>
</protein>
<dbReference type="EMBL" id="X17141">
    <property type="protein sequence ID" value="CAA35017.1"/>
    <property type="molecule type" value="Genomic_DNA"/>
</dbReference>
<dbReference type="PIR" id="A02648">
    <property type="entry name" value="HSTE41"/>
</dbReference>
<dbReference type="PIR" id="S10294">
    <property type="entry name" value="S10294"/>
</dbReference>
<dbReference type="SMR" id="P02310"/>
<dbReference type="iPTMnet" id="P02310"/>
<dbReference type="GO" id="GO:0000786">
    <property type="term" value="C:nucleosome"/>
    <property type="evidence" value="ECO:0007669"/>
    <property type="project" value="UniProtKB-KW"/>
</dbReference>
<dbReference type="GO" id="GO:0005634">
    <property type="term" value="C:nucleus"/>
    <property type="evidence" value="ECO:0007669"/>
    <property type="project" value="UniProtKB-SubCell"/>
</dbReference>
<dbReference type="GO" id="GO:0003677">
    <property type="term" value="F:DNA binding"/>
    <property type="evidence" value="ECO:0007669"/>
    <property type="project" value="UniProtKB-KW"/>
</dbReference>
<dbReference type="GO" id="GO:0046982">
    <property type="term" value="F:protein heterodimerization activity"/>
    <property type="evidence" value="ECO:0007669"/>
    <property type="project" value="InterPro"/>
</dbReference>
<dbReference type="GO" id="GO:0030527">
    <property type="term" value="F:structural constituent of chromatin"/>
    <property type="evidence" value="ECO:0007669"/>
    <property type="project" value="InterPro"/>
</dbReference>
<dbReference type="CDD" id="cd22912">
    <property type="entry name" value="HFD_H4"/>
    <property type="match status" value="1"/>
</dbReference>
<dbReference type="FunFam" id="1.10.20.10:FF:000012">
    <property type="entry name" value="Histone H4"/>
    <property type="match status" value="1"/>
</dbReference>
<dbReference type="Gene3D" id="1.10.20.10">
    <property type="entry name" value="Histone, subunit A"/>
    <property type="match status" value="1"/>
</dbReference>
<dbReference type="InterPro" id="IPR035425">
    <property type="entry name" value="CENP-T/H4_C"/>
</dbReference>
<dbReference type="InterPro" id="IPR009072">
    <property type="entry name" value="Histone-fold"/>
</dbReference>
<dbReference type="InterPro" id="IPR001951">
    <property type="entry name" value="Histone_H4"/>
</dbReference>
<dbReference type="InterPro" id="IPR019809">
    <property type="entry name" value="Histone_H4_CS"/>
</dbReference>
<dbReference type="PANTHER" id="PTHR10484">
    <property type="entry name" value="HISTONE H4"/>
    <property type="match status" value="1"/>
</dbReference>
<dbReference type="Pfam" id="PF15511">
    <property type="entry name" value="CENP-T_C"/>
    <property type="match status" value="1"/>
</dbReference>
<dbReference type="PRINTS" id="PR00623">
    <property type="entry name" value="HISTONEH4"/>
</dbReference>
<dbReference type="SMART" id="SM00417">
    <property type="entry name" value="H4"/>
    <property type="match status" value="1"/>
</dbReference>
<dbReference type="SUPFAM" id="SSF47113">
    <property type="entry name" value="Histone-fold"/>
    <property type="match status" value="1"/>
</dbReference>
<dbReference type="PROSITE" id="PS00047">
    <property type="entry name" value="HISTONE_H4"/>
    <property type="match status" value="1"/>
</dbReference>
<sequence length="103" mass="11328">MAGGKGGKGMGKVGAKRHSKRSNKASIEGITKPAIRRLARRGGVKRISSFIYDDSRQVLKSFLENVVRDAVTYTEHARRKTVTAMDVVYALKRQGRTLYGFGG</sequence>
<name>H41_TETPY</name>
<proteinExistence type="evidence at protein level"/>
<organism>
    <name type="scientific">Tetrahymena pyriformis</name>
    <dbReference type="NCBI Taxonomy" id="5908"/>
    <lineage>
        <taxon>Eukaryota</taxon>
        <taxon>Sar</taxon>
        <taxon>Alveolata</taxon>
        <taxon>Ciliophora</taxon>
        <taxon>Intramacronucleata</taxon>
        <taxon>Oligohymenophorea</taxon>
        <taxon>Hymenostomatida</taxon>
        <taxon>Tetrahymenina</taxon>
        <taxon>Tetrahymenidae</taxon>
        <taxon>Tetrahymena</taxon>
    </lineage>
</organism>
<reference key="1">
    <citation type="journal article" date="1990" name="Nucleic Acids Res.">
        <title>Characterization of the promoter region of Tetrahymena genes.</title>
        <authorList>
            <person name="Brunk C.F."/>
            <person name="Sadler L.A."/>
        </authorList>
    </citation>
    <scope>NUCLEOTIDE SEQUENCE [GENOMIC DNA] OF 1-31</scope>
    <source>
        <strain>GL</strain>
    </source>
</reference>
<reference key="2">
    <citation type="journal article" date="1984" name="J. Biochem.">
        <title>Tetrahymena histone H4. Complete amino acid sequences of two variants.</title>
        <authorList>
            <person name="Hayashi H."/>
            <person name="Nomoto M."/>
            <person name="Iwai K."/>
        </authorList>
    </citation>
    <scope>PROTEIN SEQUENCE OF 2-103</scope>
    <scope>ACETYLATION AT LYS-5; LYS-8; LYS-12 AND LYS-16</scope>
</reference>